<comment type="function">
    <text evidence="1">Ribosome biogenesis factor. Involved in nucleolar processing of pre-18S ribosomal RNA. Required for optimal pre-ribosomal RNA transcription by RNA polymerase I. Part of the small subunit (SSU) processome, first precursor of the small eukaryotic ribosomal subunit. During the assembly of the SSU processome in the nucleolus, many ribosome biogenesis factors, an RNA chaperone and ribosomal proteins associate with the nascent pre-rRNA and work in concert to generate RNA folding, modifications, rearrangements and cleavage as well as targeted degradation of pre-ribosomal RNA by the RNA exosome.</text>
</comment>
<comment type="subunit">
    <text evidence="1">Part of the small subunit (SSU) processome, composed of more than 70 proteins and the RNA chaperone small nucleolar RNA (snoRNA) U3. May be a component of the proposed t-UTP subcomplex of the ribosomal small subunit (SSU) processome.</text>
</comment>
<comment type="subcellular location">
    <subcellularLocation>
        <location evidence="1">Nucleus</location>
        <location evidence="1">Nucleolus</location>
    </subcellularLocation>
</comment>
<proteinExistence type="evidence at transcript level"/>
<name>UTP15_CHICK</name>
<organism>
    <name type="scientific">Gallus gallus</name>
    <name type="common">Chicken</name>
    <dbReference type="NCBI Taxonomy" id="9031"/>
    <lineage>
        <taxon>Eukaryota</taxon>
        <taxon>Metazoa</taxon>
        <taxon>Chordata</taxon>
        <taxon>Craniata</taxon>
        <taxon>Vertebrata</taxon>
        <taxon>Euteleostomi</taxon>
        <taxon>Archelosauria</taxon>
        <taxon>Archosauria</taxon>
        <taxon>Dinosauria</taxon>
        <taxon>Saurischia</taxon>
        <taxon>Theropoda</taxon>
        <taxon>Coelurosauria</taxon>
        <taxon>Aves</taxon>
        <taxon>Neognathae</taxon>
        <taxon>Galloanserae</taxon>
        <taxon>Galliformes</taxon>
        <taxon>Phasianidae</taxon>
        <taxon>Phasianinae</taxon>
        <taxon>Gallus</taxon>
    </lineage>
</organism>
<keyword id="KW-0539">Nucleus</keyword>
<keyword id="KW-1185">Reference proteome</keyword>
<keyword id="KW-0677">Repeat</keyword>
<keyword id="KW-0698">rRNA processing</keyword>
<keyword id="KW-0853">WD repeat</keyword>
<reference key="1">
    <citation type="journal article" date="2005" name="Genome Biol.">
        <title>Full-length cDNAs from chicken bursal lymphocytes to facilitate gene function analysis.</title>
        <authorList>
            <person name="Caldwell R.B."/>
            <person name="Kierzek A.M."/>
            <person name="Arakawa H."/>
            <person name="Bezzubov Y."/>
            <person name="Zaim J."/>
            <person name="Fiedler P."/>
            <person name="Kutter S."/>
            <person name="Blagodatski A."/>
            <person name="Kostovska D."/>
            <person name="Koter M."/>
            <person name="Plachy J."/>
            <person name="Carninci P."/>
            <person name="Hayashizaki Y."/>
            <person name="Buerstedde J.-M."/>
        </authorList>
    </citation>
    <scope>NUCLEOTIDE SEQUENCE [LARGE SCALE MRNA]</scope>
    <source>
        <strain>CB</strain>
        <tissue>Bursa of Fabricius</tissue>
    </source>
</reference>
<accession>Q5F3D7</accession>
<sequence length="520" mass="58393">MASYKPVVIPAVPKLGEKITQDTLYWRGYKTPVQIKEFGAINKIDFSPVPPYNYAVTASSRVHIYGRYSQEPIKTFSRFKDAAYCATYRDDGKLLVAGSEEGSIRLFDISGRAPLRQFDGHTKAVHVVGFLSDKYRIFSGGDDYSSSLWDIPSATEIVSYSEHSDYVRCGCASKLNGDVFITGSYDHTVKVFDARTKSSVMTIEHGHPVESVLLFPSGGLLVSAGGRYVKVWDVLKGGQLLVSLKNHHKTVTCLCLNSSGQRLLSGSLDRHVKIYSTTSYKVVHSFNYATSILSLALSPEDETIIVGMTNGVLNVKHRKPEESKEKSQKKRQPAYRTYVKGRNYMPKQEDFFVSKPGRCIMRKYDKLLKSFQSSKALDAVLEPHIRLYTPEVTVAVMQELNRRGTLRSALAGRDEKQISLLLTFVTRRVIEPRFTPVLITVADMITDIYQPVVGQSALVDKQFLRLQEAIGREIDYQEELLEVLGMMDALFATLTEKRATYLEENKSNGLTKTLDQDISI</sequence>
<evidence type="ECO:0000250" key="1">
    <source>
        <dbReference type="UniProtKB" id="Q8TED0"/>
    </source>
</evidence>
<feature type="chain" id="PRO_0000051324" description="U3 small nucleolar RNA-associated protein 15 homolog">
    <location>
        <begin position="1"/>
        <end position="520"/>
    </location>
</feature>
<feature type="repeat" description="WD 1">
    <location>
        <begin position="36"/>
        <end position="75"/>
    </location>
</feature>
<feature type="repeat" description="WD 2">
    <location>
        <begin position="78"/>
        <end position="117"/>
    </location>
</feature>
<feature type="repeat" description="WD 3">
    <location>
        <begin position="120"/>
        <end position="159"/>
    </location>
</feature>
<feature type="repeat" description="WD 4">
    <location>
        <begin position="162"/>
        <end position="202"/>
    </location>
</feature>
<feature type="repeat" description="WD 5">
    <location>
        <begin position="204"/>
        <end position="242"/>
    </location>
</feature>
<feature type="repeat" description="WD 6">
    <location>
        <begin position="246"/>
        <end position="285"/>
    </location>
</feature>
<feature type="repeat" description="WD 7">
    <location>
        <begin position="287"/>
        <end position="326"/>
    </location>
</feature>
<protein>
    <recommendedName>
        <fullName>U3 small nucleolar RNA-associated protein 15 homolog</fullName>
    </recommendedName>
</protein>
<gene>
    <name type="primary">UTP15</name>
    <name type="ORF">RCJMB04_20m16</name>
</gene>
<dbReference type="EMBL" id="AJ851713">
    <property type="protein sequence ID" value="CAH65347.1"/>
    <property type="molecule type" value="mRNA"/>
</dbReference>
<dbReference type="RefSeq" id="NP_001012624.1">
    <property type="nucleotide sequence ID" value="NM_001012606.2"/>
</dbReference>
<dbReference type="SMR" id="Q5F3D7"/>
<dbReference type="FunCoup" id="Q5F3D7">
    <property type="interactions" value="1695"/>
</dbReference>
<dbReference type="STRING" id="9031.ENSGALP00000029076"/>
<dbReference type="GlyGen" id="Q5F3D7">
    <property type="glycosylation" value="1 site"/>
</dbReference>
<dbReference type="PaxDb" id="9031-ENSGALP00000029076"/>
<dbReference type="GeneID" id="426152"/>
<dbReference type="KEGG" id="gga:426152"/>
<dbReference type="CTD" id="84135"/>
<dbReference type="VEuPathDB" id="HostDB:geneid_426152"/>
<dbReference type="eggNOG" id="KOG0292">
    <property type="taxonomic scope" value="Eukaryota"/>
</dbReference>
<dbReference type="eggNOG" id="KOG0310">
    <property type="taxonomic scope" value="Eukaryota"/>
</dbReference>
<dbReference type="HOGENOM" id="CLU_021102_4_1_1"/>
<dbReference type="InParanoid" id="Q5F3D7"/>
<dbReference type="OMA" id="ATYQVVH"/>
<dbReference type="OrthoDB" id="431715at2759"/>
<dbReference type="PhylomeDB" id="Q5F3D7"/>
<dbReference type="TreeFam" id="TF319494"/>
<dbReference type="Reactome" id="R-GGA-6791226">
    <property type="pathway name" value="Major pathway of rRNA processing in the nucleolus and cytosol"/>
</dbReference>
<dbReference type="PRO" id="PR:Q5F3D7"/>
<dbReference type="Proteomes" id="UP000000539">
    <property type="component" value="Chromosome Z"/>
</dbReference>
<dbReference type="Bgee" id="ENSGALG00000013510">
    <property type="expression patterns" value="Expressed in spermatocyte and 13 other cell types or tissues"/>
</dbReference>
<dbReference type="GO" id="GO:0005730">
    <property type="term" value="C:nucleolus"/>
    <property type="evidence" value="ECO:0000318"/>
    <property type="project" value="GO_Central"/>
</dbReference>
<dbReference type="GO" id="GO:0032040">
    <property type="term" value="C:small-subunit processome"/>
    <property type="evidence" value="ECO:0000250"/>
    <property type="project" value="UniProtKB"/>
</dbReference>
<dbReference type="GO" id="GO:0045943">
    <property type="term" value="P:positive regulation of transcription by RNA polymerase I"/>
    <property type="evidence" value="ECO:0000318"/>
    <property type="project" value="GO_Central"/>
</dbReference>
<dbReference type="GO" id="GO:0042274">
    <property type="term" value="P:ribosomal small subunit biogenesis"/>
    <property type="evidence" value="ECO:0000250"/>
    <property type="project" value="UniProtKB"/>
</dbReference>
<dbReference type="GO" id="GO:0006364">
    <property type="term" value="P:rRNA processing"/>
    <property type="evidence" value="ECO:0000318"/>
    <property type="project" value="GO_Central"/>
</dbReference>
<dbReference type="CDD" id="cd00200">
    <property type="entry name" value="WD40"/>
    <property type="match status" value="1"/>
</dbReference>
<dbReference type="FunFam" id="2.130.10.10:FF:000398">
    <property type="entry name" value="U3 small nucleolar RNA-associated protein 15 homolog"/>
    <property type="match status" value="1"/>
</dbReference>
<dbReference type="FunFam" id="2.130.10.10:FF:000448">
    <property type="entry name" value="U3 small nucleolar RNA-associated protein 15 homolog"/>
    <property type="match status" value="1"/>
</dbReference>
<dbReference type="Gene3D" id="2.130.10.10">
    <property type="entry name" value="YVTN repeat-like/Quinoprotein amine dehydrogenase"/>
    <property type="match status" value="2"/>
</dbReference>
<dbReference type="InterPro" id="IPR018983">
    <property type="entry name" value="U3_snoRNA-assocProt_15_C"/>
</dbReference>
<dbReference type="InterPro" id="IPR015943">
    <property type="entry name" value="WD40/YVTN_repeat-like_dom_sf"/>
</dbReference>
<dbReference type="InterPro" id="IPR019775">
    <property type="entry name" value="WD40_repeat_CS"/>
</dbReference>
<dbReference type="InterPro" id="IPR036322">
    <property type="entry name" value="WD40_repeat_dom_sf"/>
</dbReference>
<dbReference type="InterPro" id="IPR001680">
    <property type="entry name" value="WD40_rpt"/>
</dbReference>
<dbReference type="PANTHER" id="PTHR19924:SF26">
    <property type="entry name" value="U3 SMALL NUCLEOLAR RNA-ASSOCIATED PROTEIN 15 HOMOLOG"/>
    <property type="match status" value="1"/>
</dbReference>
<dbReference type="PANTHER" id="PTHR19924">
    <property type="entry name" value="UTP15 U3 SMALL NUCLEOLAR RNA-ASSOCIATED PROTEIN 15 FAMILY MEMBER"/>
    <property type="match status" value="1"/>
</dbReference>
<dbReference type="Pfam" id="PF09384">
    <property type="entry name" value="UTP15_C"/>
    <property type="match status" value="1"/>
</dbReference>
<dbReference type="Pfam" id="PF00400">
    <property type="entry name" value="WD40"/>
    <property type="match status" value="5"/>
</dbReference>
<dbReference type="SMART" id="SM00320">
    <property type="entry name" value="WD40"/>
    <property type="match status" value="7"/>
</dbReference>
<dbReference type="SUPFAM" id="SSF50978">
    <property type="entry name" value="WD40 repeat-like"/>
    <property type="match status" value="1"/>
</dbReference>
<dbReference type="PROSITE" id="PS00678">
    <property type="entry name" value="WD_REPEATS_1"/>
    <property type="match status" value="1"/>
</dbReference>
<dbReference type="PROSITE" id="PS50082">
    <property type="entry name" value="WD_REPEATS_2"/>
    <property type="match status" value="2"/>
</dbReference>
<dbReference type="PROSITE" id="PS50294">
    <property type="entry name" value="WD_REPEATS_REGION"/>
    <property type="match status" value="1"/>
</dbReference>